<evidence type="ECO:0000250" key="1">
    <source>
        <dbReference type="UniProtKB" id="Q06321"/>
    </source>
</evidence>
<evidence type="ECO:0000250" key="2">
    <source>
        <dbReference type="UniProtKB" id="Q2U0C3"/>
    </source>
</evidence>
<evidence type="ECO:0000255" key="3"/>
<evidence type="ECO:0000255" key="4">
    <source>
        <dbReference type="PROSITE-ProRule" id="PRU00145"/>
    </source>
</evidence>
<evidence type="ECO:0000256" key="5">
    <source>
        <dbReference type="SAM" id="MobiDB-lite"/>
    </source>
</evidence>
<evidence type="ECO:0000305" key="6"/>
<gene>
    <name evidence="1" type="primary">atg26</name>
    <name type="ORF">NFIA_034590</name>
</gene>
<reference key="1">
    <citation type="journal article" date="2008" name="PLoS Genet.">
        <title>Genomic islands in the pathogenic filamentous fungus Aspergillus fumigatus.</title>
        <authorList>
            <person name="Fedorova N.D."/>
            <person name="Khaldi N."/>
            <person name="Joardar V.S."/>
            <person name="Maiti R."/>
            <person name="Amedeo P."/>
            <person name="Anderson M.J."/>
            <person name="Crabtree J."/>
            <person name="Silva J.C."/>
            <person name="Badger J.H."/>
            <person name="Albarraq A."/>
            <person name="Angiuoli S."/>
            <person name="Bussey H."/>
            <person name="Bowyer P."/>
            <person name="Cotty P.J."/>
            <person name="Dyer P.S."/>
            <person name="Egan A."/>
            <person name="Galens K."/>
            <person name="Fraser-Liggett C.M."/>
            <person name="Haas B.J."/>
            <person name="Inman J.M."/>
            <person name="Kent R."/>
            <person name="Lemieux S."/>
            <person name="Malavazi I."/>
            <person name="Orvis J."/>
            <person name="Roemer T."/>
            <person name="Ronning C.M."/>
            <person name="Sundaram J.P."/>
            <person name="Sutton G."/>
            <person name="Turner G."/>
            <person name="Venter J.C."/>
            <person name="White O.R."/>
            <person name="Whitty B.R."/>
            <person name="Youngman P."/>
            <person name="Wolfe K.H."/>
            <person name="Goldman G.H."/>
            <person name="Wortman J.R."/>
            <person name="Jiang B."/>
            <person name="Denning D.W."/>
            <person name="Nierman W.C."/>
        </authorList>
    </citation>
    <scope>NUCLEOTIDE SEQUENCE [LARGE SCALE GENOMIC DNA]</scope>
    <source>
        <strain>ATCC 1020 / DSM 3700 / CBS 544.65 / FGSC A1164 / JCM 1740 / NRRL 181 / WB 181</strain>
    </source>
</reference>
<name>ATG26_NEOFI</name>
<sequence>MRPFLDDAKRRVDRKLSASRQSLSTSRLLPSALPDRLKDNHDAQVDFTAPPGGSGSREGHLQYMQQSIFGMIAAVGSRSDFHARFDESSDSDGESEQRPRKESSVRKGTSASANTSSPLDSSQRSSSRTDGKSEKESGTRGRRHPRTISDHKLFRPFESNSKHEPQTDPSTGDEMPNISPPTRPRSATPRAAPILSRMVEAQAQFDLKASSTERSQPSLDESGEKGPRGASVSPLSTRLMDMFGFDKPEKVLVEYACSLLQSILLQGYMYVTEGHICFYAYLPKKSTVAIKSGYLYKRGRKNPKYSRYWFSLKGDVLSYYADPSNLYFPSGHVDLRYGISASLGEAKEKGREPRDFQVTTDQRTYYFRADSSMSAKEWVKALQKVIFRTHNEGESVKISFPIESIIDIEESPMVDFAETFKIRVIEDDDSYAIDEYFFTFFNSGREAFEFLRSLINDQSLKISSQHLSPQPDRSPRSDPTRKSRNRWSLTSGTSRVLGNSRAETQRKASASTSHTSLAHDVIKSSPATRHQDSSESILNSFEQGTESSAAWQSMTDAAESASQILNRSDVFQSPTIHGLDRRPSGGERRGRRNSDETARSLSTRANVGTGQQIDELGRRMDGDTSGREARDSTGESDQYTQDPTKSFSGAPSLNELVKAGVYPLQRAAGLAEYLRTRSKQMSNLLASESMGYIEKVSGMWTGGRKHYGEAEDVLPDDQDVDPEDKEDGCNYGDRFRAHFALPRTEKLQATYFAYLHRVLPLYGKIYVSQKKLCFRSLIPGTRTKMILPLRDIENVEKEKGFRFGYHGLVIIIRGHEELFFEFRTSDARDDCAVTLHQHLEAVKFMAESGLLAEQEQNDSEAAMTEHRMLQEARYDDYGENDLRPLNESSELHPIFDDPRASIVNFKPAESLRITCLTIGSRGDVQPYIALCKGLLAEGHRPKIATHAEFEPWVRKHGIDFAPVEGDPAELMRICVENGMFTYSFLKEASQKFRGWIDDLLSSAWASCQDSDLLIESPSAMAGIHIAEALRIPYFRAFTMPWSRTRAYPHAFAVPEHRMGGAYNYITYVMFDNVFWKAIAGQVNRWRKNELGLKATTLDKMQPNKVPFLYNYSPSVVPPPLDYPDWIRITGYWFLNEGSDWTPPTALCEFIHRAREDGKKIVYIGFGSIVVSDPSALTKTVIESVRKADVRCILSKGWSDRLGDPASAKPEVPLPPEIHQIQAAPHDWLFSHIDAAVHHGGAGTTGASLRAGVPTIIKPFFGDQFFFGSRVEDLGVGICMKKLNVSVFSRALWEATHSERMIIRAQDLGARIRSEDGVATAIQAIYRDLEYAKTLARQRSIASSTPFSPTPSAKTTAEQDADDDVEDSEEWTFVGDDTDMEMSRRLRDRAISDADMLPDRLLANSVPGDSGPGRKLSGR</sequence>
<proteinExistence type="inferred from homology"/>
<accession>A1CYS1</accession>
<keyword id="KW-0072">Autophagy</keyword>
<keyword id="KW-0963">Cytoplasm</keyword>
<keyword id="KW-0328">Glycosyltransferase</keyword>
<keyword id="KW-0444">Lipid biosynthesis</keyword>
<keyword id="KW-0443">Lipid metabolism</keyword>
<keyword id="KW-0472">Membrane</keyword>
<keyword id="KW-0653">Protein transport</keyword>
<keyword id="KW-1185">Reference proteome</keyword>
<keyword id="KW-0677">Repeat</keyword>
<keyword id="KW-0752">Steroid biosynthesis</keyword>
<keyword id="KW-0753">Steroid metabolism</keyword>
<keyword id="KW-0756">Sterol biosynthesis</keyword>
<keyword id="KW-1207">Sterol metabolism</keyword>
<keyword id="KW-0808">Transferase</keyword>
<keyword id="KW-0813">Transport</keyword>
<dbReference type="EC" id="2.4.1.-" evidence="1"/>
<dbReference type="EC" id="2.4.1.173" evidence="1"/>
<dbReference type="EMBL" id="DS027686">
    <property type="protein sequence ID" value="EAW23891.1"/>
    <property type="molecule type" value="Genomic_DNA"/>
</dbReference>
<dbReference type="RefSeq" id="XP_001265788.1">
    <property type="nucleotide sequence ID" value="XM_001265787.1"/>
</dbReference>
<dbReference type="SMR" id="A1CYS1"/>
<dbReference type="STRING" id="331117.A1CYS1"/>
<dbReference type="EnsemblFungi" id="EAW23891">
    <property type="protein sequence ID" value="EAW23891"/>
    <property type="gene ID" value="NFIA_034590"/>
</dbReference>
<dbReference type="GeneID" id="4592869"/>
<dbReference type="KEGG" id="nfi:NFIA_034590"/>
<dbReference type="VEuPathDB" id="FungiDB:NFIA_034590"/>
<dbReference type="eggNOG" id="KOG1192">
    <property type="taxonomic scope" value="Eukaryota"/>
</dbReference>
<dbReference type="HOGENOM" id="CLU_000537_6_0_1"/>
<dbReference type="OMA" id="WRNKTLG"/>
<dbReference type="OrthoDB" id="10261837at2759"/>
<dbReference type="Proteomes" id="UP000006702">
    <property type="component" value="Unassembled WGS sequence"/>
</dbReference>
<dbReference type="GO" id="GO:0034045">
    <property type="term" value="C:phagophore assembly site membrane"/>
    <property type="evidence" value="ECO:0007669"/>
    <property type="project" value="UniProtKB-SubCell"/>
</dbReference>
<dbReference type="GO" id="GO:0016906">
    <property type="term" value="F:sterol 3-beta-glucosyltransferase activity"/>
    <property type="evidence" value="ECO:0007669"/>
    <property type="project" value="UniProtKB-EC"/>
</dbReference>
<dbReference type="GO" id="GO:0006914">
    <property type="term" value="P:autophagy"/>
    <property type="evidence" value="ECO:0007669"/>
    <property type="project" value="UniProtKB-KW"/>
</dbReference>
<dbReference type="GO" id="GO:0005975">
    <property type="term" value="P:carbohydrate metabolic process"/>
    <property type="evidence" value="ECO:0007669"/>
    <property type="project" value="InterPro"/>
</dbReference>
<dbReference type="GO" id="GO:0030259">
    <property type="term" value="P:lipid glycosylation"/>
    <property type="evidence" value="ECO:0007669"/>
    <property type="project" value="InterPro"/>
</dbReference>
<dbReference type="GO" id="GO:0015031">
    <property type="term" value="P:protein transport"/>
    <property type="evidence" value="ECO:0007669"/>
    <property type="project" value="UniProtKB-KW"/>
</dbReference>
<dbReference type="GO" id="GO:0016126">
    <property type="term" value="P:sterol biosynthetic process"/>
    <property type="evidence" value="ECO:0007669"/>
    <property type="project" value="UniProtKB-KW"/>
</dbReference>
<dbReference type="CDD" id="cd03784">
    <property type="entry name" value="GT1_Gtf-like"/>
    <property type="match status" value="1"/>
</dbReference>
<dbReference type="CDD" id="cd13215">
    <property type="entry name" value="PH-GRAM1_AGT26"/>
    <property type="match status" value="1"/>
</dbReference>
<dbReference type="CDD" id="cd13216">
    <property type="entry name" value="PH-GRAM2_AGT26"/>
    <property type="match status" value="1"/>
</dbReference>
<dbReference type="FunFam" id="2.30.29.30:FF:000303">
    <property type="entry name" value="Sterol 3-beta-glucosyltransferase"/>
    <property type="match status" value="1"/>
</dbReference>
<dbReference type="FunFam" id="2.30.29.30:FF:000560">
    <property type="entry name" value="Sterol 3-beta-glucosyltransferase"/>
    <property type="match status" value="1"/>
</dbReference>
<dbReference type="FunFam" id="3.40.50.2000:FF:000029">
    <property type="entry name" value="Sterol 3-beta-glucosyltransferase"/>
    <property type="match status" value="1"/>
</dbReference>
<dbReference type="FunFam" id="3.40.50.2000:FF:000009">
    <property type="entry name" value="Sterol 3-beta-glucosyltransferase UGT80A2"/>
    <property type="match status" value="1"/>
</dbReference>
<dbReference type="Gene3D" id="3.40.50.2000">
    <property type="entry name" value="Glycogen Phosphorylase B"/>
    <property type="match status" value="2"/>
</dbReference>
<dbReference type="Gene3D" id="2.30.29.30">
    <property type="entry name" value="Pleckstrin-homology domain (PH domain)/Phosphotyrosine-binding domain (PTB)"/>
    <property type="match status" value="3"/>
</dbReference>
<dbReference type="InterPro" id="IPR048066">
    <property type="entry name" value="ATG26_PH_GRAM1"/>
</dbReference>
<dbReference type="InterPro" id="IPR048065">
    <property type="entry name" value="ATG26_PH_GRAM2"/>
</dbReference>
<dbReference type="InterPro" id="IPR010610">
    <property type="entry name" value="EryCIII-like_C"/>
</dbReference>
<dbReference type="InterPro" id="IPR050426">
    <property type="entry name" value="Glycosyltransferase_28"/>
</dbReference>
<dbReference type="InterPro" id="IPR004276">
    <property type="entry name" value="GlycoTrans_28_N"/>
</dbReference>
<dbReference type="InterPro" id="IPR004182">
    <property type="entry name" value="GRAM"/>
</dbReference>
<dbReference type="InterPro" id="IPR011993">
    <property type="entry name" value="PH-like_dom_sf"/>
</dbReference>
<dbReference type="InterPro" id="IPR001849">
    <property type="entry name" value="PH_domain"/>
</dbReference>
<dbReference type="InterPro" id="IPR002213">
    <property type="entry name" value="UDP_glucos_trans"/>
</dbReference>
<dbReference type="PANTHER" id="PTHR48050">
    <property type="entry name" value="STEROL 3-BETA-GLUCOSYLTRANSFERASE"/>
    <property type="match status" value="1"/>
</dbReference>
<dbReference type="PANTHER" id="PTHR48050:SF25">
    <property type="entry name" value="STEROL 3-BETA-GLUCOSYLTRANSFERASE"/>
    <property type="match status" value="1"/>
</dbReference>
<dbReference type="Pfam" id="PF06722">
    <property type="entry name" value="EryCIII-like_C"/>
    <property type="match status" value="1"/>
</dbReference>
<dbReference type="Pfam" id="PF03033">
    <property type="entry name" value="Glyco_transf_28"/>
    <property type="match status" value="1"/>
</dbReference>
<dbReference type="Pfam" id="PF02893">
    <property type="entry name" value="GRAM"/>
    <property type="match status" value="2"/>
</dbReference>
<dbReference type="Pfam" id="PF00169">
    <property type="entry name" value="PH"/>
    <property type="match status" value="1"/>
</dbReference>
<dbReference type="SMART" id="SM00568">
    <property type="entry name" value="GRAM"/>
    <property type="match status" value="2"/>
</dbReference>
<dbReference type="SMART" id="SM00233">
    <property type="entry name" value="PH"/>
    <property type="match status" value="1"/>
</dbReference>
<dbReference type="SUPFAM" id="SSF50729">
    <property type="entry name" value="PH domain-like"/>
    <property type="match status" value="1"/>
</dbReference>
<dbReference type="SUPFAM" id="SSF53756">
    <property type="entry name" value="UDP-Glycosyltransferase/glycogen phosphorylase"/>
    <property type="match status" value="1"/>
</dbReference>
<dbReference type="PROSITE" id="PS50003">
    <property type="entry name" value="PH_DOMAIN"/>
    <property type="match status" value="1"/>
</dbReference>
<protein>
    <recommendedName>
        <fullName evidence="6">Sterol 3-beta-glucosyltransferase</fullName>
        <ecNumber evidence="1">2.4.1.-</ecNumber>
        <ecNumber evidence="1">2.4.1.173</ecNumber>
    </recommendedName>
    <alternativeName>
        <fullName evidence="1">Autophagy-related protein 26</fullName>
    </alternativeName>
</protein>
<comment type="function">
    <text evidence="1">Sterol glycosyltransferase responsible for the glycosylation of ergosterol to form ergosterol-glucoside.</text>
</comment>
<comment type="catalytic activity">
    <reaction evidence="1">
        <text>a sterol + UDP-alpha-D-glucose = a sterol 3-beta-D-glucoside + UDP + H(+)</text>
        <dbReference type="Rhea" id="RHEA:22724"/>
        <dbReference type="ChEBI" id="CHEBI:15378"/>
        <dbReference type="ChEBI" id="CHEBI:15889"/>
        <dbReference type="ChEBI" id="CHEBI:37424"/>
        <dbReference type="ChEBI" id="CHEBI:58223"/>
        <dbReference type="ChEBI" id="CHEBI:58885"/>
        <dbReference type="EC" id="2.4.1.173"/>
    </reaction>
    <physiologicalReaction direction="left-to-right" evidence="1">
        <dbReference type="Rhea" id="RHEA:22725"/>
    </physiologicalReaction>
</comment>
<comment type="catalytic activity">
    <reaction evidence="1">
        <text>ergosterol + UDP-alpha-D-glucose = ergosteryl 3-beta-D-glucoside + UDP + H(+)</text>
        <dbReference type="Rhea" id="RHEA:61836"/>
        <dbReference type="ChEBI" id="CHEBI:15378"/>
        <dbReference type="ChEBI" id="CHEBI:16933"/>
        <dbReference type="ChEBI" id="CHEBI:52973"/>
        <dbReference type="ChEBI" id="CHEBI:58223"/>
        <dbReference type="ChEBI" id="CHEBI:58885"/>
    </reaction>
    <physiologicalReaction direction="left-to-right" evidence="1">
        <dbReference type="Rhea" id="RHEA:61837"/>
    </physiologicalReaction>
</comment>
<comment type="subcellular location">
    <subcellularLocation>
        <location evidence="1">Cytoplasm</location>
    </subcellularLocation>
    <subcellularLocation>
        <location evidence="2">Preautophagosomal structure membrane</location>
        <topology evidence="2">Peripheral membrane protein</topology>
    </subcellularLocation>
</comment>
<comment type="domain">
    <text evidence="2">The GRAM and PH domains are required for the localization of ATG26 to the preautophagosomal structure (PAS) and are involved in autophagy (By similarity).</text>
</comment>
<comment type="similarity">
    <text evidence="6">Belongs to the glycosyltransferase 28 family.</text>
</comment>
<feature type="chain" id="PRO_0000318044" description="Sterol 3-beta-glucosyltransferase">
    <location>
        <begin position="1"/>
        <end position="1418"/>
    </location>
</feature>
<feature type="domain" description="GRAM 1" evidence="3">
    <location>
        <begin position="249"/>
        <end position="288"/>
    </location>
</feature>
<feature type="domain" description="PH" evidence="4">
    <location>
        <begin position="289"/>
        <end position="387"/>
    </location>
</feature>
<feature type="domain" description="GRAM 2" evidence="3">
    <location>
        <begin position="733"/>
        <end position="799"/>
    </location>
</feature>
<feature type="region of interest" description="Disordered" evidence="5">
    <location>
        <begin position="1"/>
        <end position="59"/>
    </location>
</feature>
<feature type="region of interest" description="Disordered" evidence="5">
    <location>
        <begin position="83"/>
        <end position="188"/>
    </location>
</feature>
<feature type="region of interest" description="Disordered" evidence="5">
    <location>
        <begin position="207"/>
        <end position="233"/>
    </location>
</feature>
<feature type="region of interest" description="Disordered" evidence="5">
    <location>
        <begin position="462"/>
        <end position="651"/>
    </location>
</feature>
<feature type="region of interest" description="Disordered" evidence="5">
    <location>
        <begin position="1339"/>
        <end position="1418"/>
    </location>
</feature>
<feature type="compositionally biased region" description="Basic and acidic residues" evidence="5">
    <location>
        <begin position="1"/>
        <end position="16"/>
    </location>
</feature>
<feature type="compositionally biased region" description="Polar residues" evidence="5">
    <location>
        <begin position="18"/>
        <end position="28"/>
    </location>
</feature>
<feature type="compositionally biased region" description="Basic and acidic residues" evidence="5">
    <location>
        <begin position="35"/>
        <end position="44"/>
    </location>
</feature>
<feature type="compositionally biased region" description="Basic and acidic residues" evidence="5">
    <location>
        <begin position="95"/>
        <end position="105"/>
    </location>
</feature>
<feature type="compositionally biased region" description="Polar residues" evidence="5">
    <location>
        <begin position="106"/>
        <end position="115"/>
    </location>
</feature>
<feature type="compositionally biased region" description="Low complexity" evidence="5">
    <location>
        <begin position="116"/>
        <end position="126"/>
    </location>
</feature>
<feature type="compositionally biased region" description="Basic and acidic residues" evidence="5">
    <location>
        <begin position="127"/>
        <end position="139"/>
    </location>
</feature>
<feature type="compositionally biased region" description="Basic and acidic residues" evidence="5">
    <location>
        <begin position="147"/>
        <end position="166"/>
    </location>
</feature>
<feature type="compositionally biased region" description="Polar residues" evidence="5">
    <location>
        <begin position="209"/>
        <end position="219"/>
    </location>
</feature>
<feature type="compositionally biased region" description="Polar residues" evidence="5">
    <location>
        <begin position="486"/>
        <end position="497"/>
    </location>
</feature>
<feature type="compositionally biased region" description="Low complexity" evidence="5">
    <location>
        <begin position="508"/>
        <end position="519"/>
    </location>
</feature>
<feature type="compositionally biased region" description="Polar residues" evidence="5">
    <location>
        <begin position="534"/>
        <end position="575"/>
    </location>
</feature>
<feature type="compositionally biased region" description="Basic and acidic residues" evidence="5">
    <location>
        <begin position="578"/>
        <end position="598"/>
    </location>
</feature>
<feature type="compositionally biased region" description="Polar residues" evidence="5">
    <location>
        <begin position="599"/>
        <end position="612"/>
    </location>
</feature>
<feature type="compositionally biased region" description="Basic and acidic residues" evidence="5">
    <location>
        <begin position="615"/>
        <end position="633"/>
    </location>
</feature>
<feature type="compositionally biased region" description="Polar residues" evidence="5">
    <location>
        <begin position="635"/>
        <end position="651"/>
    </location>
</feature>
<feature type="compositionally biased region" description="Low complexity" evidence="5">
    <location>
        <begin position="1341"/>
        <end position="1355"/>
    </location>
</feature>
<feature type="compositionally biased region" description="Acidic residues" evidence="5">
    <location>
        <begin position="1358"/>
        <end position="1379"/>
    </location>
</feature>
<feature type="compositionally biased region" description="Basic and acidic residues" evidence="5">
    <location>
        <begin position="1380"/>
        <end position="1391"/>
    </location>
</feature>
<feature type="binding site" evidence="1">
    <location>
        <position position="920"/>
    </location>
    <ligand>
        <name>UDP-alpha-D-glucose</name>
        <dbReference type="ChEBI" id="CHEBI:58885"/>
    </ligand>
</feature>
<feature type="binding site" evidence="1">
    <location>
        <position position="921"/>
    </location>
    <ligand>
        <name>UDP-alpha-D-glucose</name>
        <dbReference type="ChEBI" id="CHEBI:58885"/>
    </ligand>
</feature>
<feature type="binding site" evidence="1">
    <location>
        <position position="923"/>
    </location>
    <ligand>
        <name>UDP-alpha-D-glucose</name>
        <dbReference type="ChEBI" id="CHEBI:58885"/>
    </ligand>
</feature>
<feature type="binding site" evidence="1">
    <location>
        <position position="1223"/>
    </location>
    <ligand>
        <name>UDP-alpha-D-glucose</name>
        <dbReference type="ChEBI" id="CHEBI:58885"/>
    </ligand>
</feature>
<feature type="binding site" evidence="1">
    <location>
        <position position="1225"/>
    </location>
    <ligand>
        <name>UDP-alpha-D-glucose</name>
        <dbReference type="ChEBI" id="CHEBI:58885"/>
    </ligand>
</feature>
<feature type="binding site" evidence="1">
    <location>
        <position position="1238"/>
    </location>
    <ligand>
        <name>UDP-alpha-D-glucose</name>
        <dbReference type="ChEBI" id="CHEBI:58885"/>
    </ligand>
</feature>
<feature type="binding site" evidence="1">
    <location>
        <position position="1242"/>
    </location>
    <ligand>
        <name>UDP-alpha-D-glucose</name>
        <dbReference type="ChEBI" id="CHEBI:58885"/>
    </ligand>
</feature>
<feature type="binding site" evidence="1">
    <location>
        <position position="1243"/>
    </location>
    <ligand>
        <name>UDP-alpha-D-glucose</name>
        <dbReference type="ChEBI" id="CHEBI:58885"/>
    </ligand>
</feature>
<feature type="binding site" evidence="1">
    <location>
        <position position="1262"/>
    </location>
    <ligand>
        <name>UDP-alpha-D-glucose</name>
        <dbReference type="ChEBI" id="CHEBI:58885"/>
    </ligand>
</feature>
<feature type="binding site" evidence="1">
    <location>
        <position position="1263"/>
    </location>
    <ligand>
        <name>UDP-alpha-D-glucose</name>
        <dbReference type="ChEBI" id="CHEBI:58885"/>
    </ligand>
</feature>
<organism>
    <name type="scientific">Neosartorya fischeri (strain ATCC 1020 / DSM 3700 / CBS 544.65 / FGSC A1164 / JCM 1740 / NRRL 181 / WB 181)</name>
    <name type="common">Aspergillus fischerianus</name>
    <dbReference type="NCBI Taxonomy" id="331117"/>
    <lineage>
        <taxon>Eukaryota</taxon>
        <taxon>Fungi</taxon>
        <taxon>Dikarya</taxon>
        <taxon>Ascomycota</taxon>
        <taxon>Pezizomycotina</taxon>
        <taxon>Eurotiomycetes</taxon>
        <taxon>Eurotiomycetidae</taxon>
        <taxon>Eurotiales</taxon>
        <taxon>Aspergillaceae</taxon>
        <taxon>Aspergillus</taxon>
        <taxon>Aspergillus subgen. Fumigati</taxon>
    </lineage>
</organism>